<dbReference type="EMBL" id="X07082">
    <property type="protein sequence ID" value="CAA30114.1"/>
    <property type="molecule type" value="Genomic_DNA"/>
</dbReference>
<dbReference type="EMBL" id="X05692">
    <property type="protein sequence ID" value="CAA29174.1"/>
    <property type="molecule type" value="Genomic_DNA"/>
</dbReference>
<dbReference type="EMBL" id="D00247">
    <property type="protein sequence ID" value="BAA00178.1"/>
    <property type="molecule type" value="Genomic_DNA"/>
</dbReference>
<dbReference type="EMBL" id="M20242">
    <property type="protein sequence ID" value="AAA22337.1"/>
    <property type="molecule type" value="Genomic_DNA"/>
</dbReference>
<dbReference type="EMBL" id="X07423">
    <property type="protein sequence ID" value="CAA30312.1"/>
    <property type="molecule type" value="Genomic_DNA"/>
</dbReference>
<dbReference type="PIR" id="S00398">
    <property type="entry name" value="USBS8I"/>
</dbReference>
<dbReference type="RefSeq" id="WP_012211099.1">
    <property type="nucleotide sequence ID" value="NZ_JABXXM010000009.1"/>
</dbReference>
<dbReference type="PDB" id="1W99">
    <property type="method" value="X-ray"/>
    <property type="resolution" value="1.75 A"/>
    <property type="chains" value="A=84-641"/>
</dbReference>
<dbReference type="PDB" id="4MOA">
    <property type="method" value="X-ray"/>
    <property type="resolution" value="2.00 A"/>
    <property type="chains" value="A=40-641"/>
</dbReference>
<dbReference type="PDBsum" id="1W99"/>
<dbReference type="PDBsum" id="4MOA"/>
<dbReference type="SMR" id="P05519"/>
<dbReference type="TCDB" id="1.C.2.1.2">
    <property type="family name" value="the channel-forming Delta-endotoxin insecticidal crystal protein (icp) family"/>
</dbReference>
<dbReference type="EvolutionaryTrace" id="P05519"/>
<dbReference type="GO" id="GO:0005102">
    <property type="term" value="F:signaling receptor binding"/>
    <property type="evidence" value="ECO:0007669"/>
    <property type="project" value="InterPro"/>
</dbReference>
<dbReference type="GO" id="GO:0090729">
    <property type="term" value="F:toxin activity"/>
    <property type="evidence" value="ECO:0007669"/>
    <property type="project" value="UniProtKB-KW"/>
</dbReference>
<dbReference type="GO" id="GO:0030435">
    <property type="term" value="P:sporulation resulting in formation of a cellular spore"/>
    <property type="evidence" value="ECO:0007669"/>
    <property type="project" value="UniProtKB-KW"/>
</dbReference>
<dbReference type="GO" id="GO:0001907">
    <property type="term" value="P:symbiont-mediated killing of host cell"/>
    <property type="evidence" value="ECO:0007669"/>
    <property type="project" value="InterPro"/>
</dbReference>
<dbReference type="CDD" id="cd04085">
    <property type="entry name" value="delta_endotoxin_C"/>
    <property type="match status" value="1"/>
</dbReference>
<dbReference type="Gene3D" id="2.60.120.260">
    <property type="entry name" value="Galactose-binding domain-like"/>
    <property type="match status" value="2"/>
</dbReference>
<dbReference type="Gene3D" id="2.100.10.10">
    <property type="entry name" value="Pesticidal crystal protein, central domain"/>
    <property type="match status" value="1"/>
</dbReference>
<dbReference type="Gene3D" id="1.20.190.10">
    <property type="entry name" value="Pesticidal crystal protein, N-terminal domain"/>
    <property type="match status" value="1"/>
</dbReference>
<dbReference type="InterPro" id="IPR048645">
    <property type="entry name" value="Cry1Ac-like_dom-VII"/>
</dbReference>
<dbReference type="InterPro" id="IPR041587">
    <property type="entry name" value="Cry_V"/>
</dbReference>
<dbReference type="InterPro" id="IPR008979">
    <property type="entry name" value="Galactose-bd-like_sf"/>
</dbReference>
<dbReference type="InterPro" id="IPR038979">
    <property type="entry name" value="Pest_crys"/>
</dbReference>
<dbReference type="InterPro" id="IPR005638">
    <property type="entry name" value="Pest_crys_dom-III"/>
</dbReference>
<dbReference type="InterPro" id="IPR005639">
    <property type="entry name" value="Pest_crys_dom_I"/>
</dbReference>
<dbReference type="InterPro" id="IPR036716">
    <property type="entry name" value="Pest_crys_N_sf"/>
</dbReference>
<dbReference type="InterPro" id="IPR036399">
    <property type="entry name" value="Pest_cryst_cen_dom_sf"/>
</dbReference>
<dbReference type="InterPro" id="IPR001178">
    <property type="entry name" value="Pest_cryst_dom_II"/>
</dbReference>
<dbReference type="PANTHER" id="PTHR37003">
    <property type="entry name" value="ENDOTOXIN_N DOMAIN-CONTAINING PROTEIN-RELATED"/>
    <property type="match status" value="1"/>
</dbReference>
<dbReference type="PANTHER" id="PTHR37003:SF2">
    <property type="entry name" value="PESTICIDAL CRYSTAL PROTEIN N-TERMINAL DOMAIN-CONTAINING PROTEIN"/>
    <property type="match status" value="1"/>
</dbReference>
<dbReference type="Pfam" id="PF17997">
    <property type="entry name" value="Cry1Ac_D5"/>
    <property type="match status" value="1"/>
</dbReference>
<dbReference type="Pfam" id="PF21463">
    <property type="entry name" value="Cry1Ac_dom-VII"/>
    <property type="match status" value="1"/>
</dbReference>
<dbReference type="Pfam" id="PF03944">
    <property type="entry name" value="Endotoxin_C"/>
    <property type="match status" value="1"/>
</dbReference>
<dbReference type="Pfam" id="PF00555">
    <property type="entry name" value="Endotoxin_M"/>
    <property type="match status" value="1"/>
</dbReference>
<dbReference type="Pfam" id="PF03945">
    <property type="entry name" value="Endotoxin_N"/>
    <property type="match status" value="1"/>
</dbReference>
<dbReference type="SUPFAM" id="SSF51096">
    <property type="entry name" value="delta-Endotoxin (insectocide), middle domain"/>
    <property type="match status" value="1"/>
</dbReference>
<dbReference type="SUPFAM" id="SSF56849">
    <property type="entry name" value="delta-Endotoxin (insectocide), N-terminal domain"/>
    <property type="match status" value="1"/>
</dbReference>
<dbReference type="SUPFAM" id="SSF49785">
    <property type="entry name" value="Galactose-binding domain-like"/>
    <property type="match status" value="2"/>
</dbReference>
<proteinExistence type="evidence at protein level"/>
<accession>P05519</accession>
<accession>P11782</accession>
<accession>P16479</accession>
<feature type="signal peptide">
    <location>
        <begin position="1"/>
        <end status="unknown"/>
    </location>
</feature>
<feature type="chain" id="PRO_0000174065" description="Pesticidal crystal protein Cry4B protoxin">
    <location>
        <begin status="unknown"/>
        <end position="1136"/>
    </location>
</feature>
<feature type="region of interest" description="Domain I" evidence="2">
    <location>
        <begin position="84"/>
        <end position="282"/>
    </location>
</feature>
<feature type="region of interest" description="Domain II" evidence="2">
    <location>
        <begin position="283"/>
        <end position="466"/>
    </location>
</feature>
<feature type="region of interest" description="Domain III" evidence="2">
    <location>
        <begin position="467"/>
        <end position="641"/>
    </location>
</feature>
<feature type="mutagenesis site" description="No change in toxicity, loss of a trypsin cleavage site." evidence="1 7 10">
    <original>R</original>
    <variation>A</variation>
    <location>
        <position position="203"/>
    </location>
</feature>
<feature type="mutagenesis site" description="No longer active against A.aegypti and A.quadrimaculatus, no activity against C.quinquefasciatus; when associated with A-203." evidence="1">
    <original>IYQ</original>
    <variation>QTT</variation>
    <location>
        <begin position="331"/>
        <end position="333"/>
    </location>
</feature>
<feature type="mutagenesis site" description="No longer active against A.aegypti and A.quadrimaculatus, no activity against C.quinquefasciatus; when associated with A-203." evidence="1">
    <original>V</original>
    <variation>VNDY</variation>
    <location>
        <position position="393"/>
    </location>
</feature>
<feature type="mutagenesis site" description="Still active against A.aegypti and A.quadrimaculatus, gains 700-fold activity against C.quinquefasciatus and 285-fold against C.pipiens; when associated with A-203." evidence="1">
    <original>D</original>
    <variation>GAV</variation>
    <location>
        <position position="454"/>
    </location>
</feature>
<feature type="mutagenesis site" description="Still active against A.aegypti and A.quadrimaculatus, gains 200-fold activity against C.quinquefasciatus and C.pipiens; when associated with A-203." evidence="1">
    <original>D</original>
    <variation>PAT</variation>
    <location>
        <position position="454"/>
    </location>
</feature>
<feature type="sequence conflict" description="In Ref. 4; AAA22337." evidence="22" ref="4">
    <original>V</original>
    <variation>D</variation>
    <location>
        <position position="51"/>
    </location>
</feature>
<feature type="sequence conflict" description="In Ref. 4; AAA22337." evidence="22" ref="4">
    <original>T</original>
    <variation>S</variation>
    <location>
        <position position="65"/>
    </location>
</feature>
<feature type="sequence conflict" description="In Ref. 4; AAA22337." evidence="22" ref="4">
    <original>LINAQEWSL</original>
    <variation>PHKCTRMVY</variation>
    <location>
        <begin position="193"/>
        <end position="201"/>
    </location>
</feature>
<feature type="sequence conflict" description="In Ref. 3; BAA00178." evidence="22" ref="3">
    <original>RS</original>
    <variation>C</variation>
    <location>
        <begin position="203"/>
        <end position="204"/>
    </location>
</feature>
<feature type="sequence conflict" description="In Ref. 4; AAA22337." evidence="22" ref="4">
    <original>AG</original>
    <variation>C</variation>
    <location>
        <begin position="205"/>
        <end position="206"/>
    </location>
</feature>
<feature type="sequence conflict" description="In Ref. 1; CAA30114." evidence="22" ref="1">
    <original>A</original>
    <variation>R</variation>
    <location>
        <position position="205"/>
    </location>
</feature>
<feature type="sequence conflict" description="In Ref. 3; BAA00178." evidence="22" ref="3">
    <original>Y</original>
    <variation>L</variation>
    <location>
        <position position="272"/>
    </location>
</feature>
<feature type="sequence conflict" description="In Ref. 3; BAA00178." evidence="22" ref="3">
    <original>D</original>
    <variation>Y</variation>
    <location>
        <position position="325"/>
    </location>
</feature>
<feature type="sequence conflict" description="In Ref. 4; AAA22337." evidence="22" ref="4">
    <original>FGSNLTHQIQLNSNVYKTSITDTSSPSNRVTKMDFYKI</original>
    <variation>LVQIYLIKFNLILIVIKLLSQILAPPLIELQKWISTKF</variation>
    <location>
        <begin position="364"/>
        <end position="401"/>
    </location>
</feature>
<feature type="sequence conflict" description="In Ref. 4; AAA22337." evidence="22" ref="4">
    <original>K</original>
    <variation>N</variation>
    <location>
        <position position="467"/>
    </location>
</feature>
<feature type="sequence conflict" description="In Ref. 4; AAA22337." evidence="22" ref="4">
    <original>K</original>
    <variation>R</variation>
    <location>
        <position position="496"/>
    </location>
</feature>
<feature type="sequence conflict" description="In Ref. 4; AAA22337." evidence="22" ref="4">
    <original>G</original>
    <variation>GG</variation>
    <location>
        <position position="519"/>
    </location>
</feature>
<feature type="sequence conflict" description="In Ref. 4; AAA22337." evidence="22" ref="4">
    <original>LNVSYVLQGVSRGTTISTESTF</original>
    <variation>IECDHMYYKEFLEEQRLVQNYV</variation>
    <location>
        <begin position="551"/>
        <end position="572"/>
    </location>
</feature>
<feature type="sequence conflict" description="In Ref. 4; AAA22337." evidence="22" ref="4">
    <original>F</original>
    <variation>N</variation>
    <location>
        <position position="594"/>
    </location>
</feature>
<feature type="sequence conflict" description="In Ref. 4; AAA22337." evidence="22" ref="4">
    <original>ELYP</original>
    <variation>GIIS</variation>
    <location>
        <begin position="687"/>
        <end position="690"/>
    </location>
</feature>
<feature type="sequence conflict" description="In Ref. 4; AAA22337." evidence="22" ref="4">
    <original>A</original>
    <variation>R</variation>
    <location>
        <position position="721"/>
    </location>
</feature>
<feature type="sequence conflict" description="In Ref. 4; AAA22337." evidence="22" ref="4">
    <original>SNRCETSAVP</original>
    <variation>LIVVSVRCA</variation>
    <location>
        <begin position="823"/>
        <end position="832"/>
    </location>
</feature>
<feature type="sequence conflict" description="In Ref. 4; AAA22337." evidence="22" ref="4">
    <original>GN</original>
    <variation>WD</variation>
    <location>
        <begin position="836"/>
        <end position="837"/>
    </location>
</feature>
<feature type="sequence conflict" description="In Ref. 4; AAA22337." evidence="22" ref="4">
    <original>E</original>
    <variation>R</variation>
    <location>
        <position position="902"/>
    </location>
</feature>
<feature type="sequence conflict" description="In Ref. 4; AAA22337." evidence="22" ref="4">
    <original>G</original>
    <variation>V</variation>
    <location>
        <position position="1015"/>
    </location>
</feature>
<feature type="turn" evidence="34">
    <location>
        <begin position="42"/>
        <end position="44"/>
    </location>
</feature>
<feature type="strand" evidence="34">
    <location>
        <begin position="45"/>
        <end position="51"/>
    </location>
</feature>
<feature type="strand" evidence="34">
    <location>
        <begin position="56"/>
        <end position="58"/>
    </location>
</feature>
<feature type="strand" evidence="34">
    <location>
        <begin position="62"/>
        <end position="64"/>
    </location>
</feature>
<feature type="strand" evidence="34">
    <location>
        <begin position="68"/>
        <end position="70"/>
    </location>
</feature>
<feature type="helix" evidence="34">
    <location>
        <begin position="74"/>
        <end position="77"/>
    </location>
</feature>
<feature type="strand" evidence="34">
    <location>
        <begin position="78"/>
        <end position="81"/>
    </location>
</feature>
<feature type="helix" evidence="33">
    <location>
        <begin position="99"/>
        <end position="135"/>
    </location>
</feature>
<feature type="helix" evidence="33">
    <location>
        <begin position="140"/>
        <end position="165"/>
    </location>
</feature>
<feature type="turn" evidence="33">
    <location>
        <begin position="171"/>
        <end position="174"/>
    </location>
</feature>
<feature type="helix" evidence="33">
    <location>
        <begin position="175"/>
        <end position="194"/>
    </location>
</feature>
<feature type="helix" evidence="33">
    <location>
        <begin position="196"/>
        <end position="199"/>
    </location>
</feature>
<feature type="helix" evidence="33">
    <location>
        <begin position="206"/>
        <end position="236"/>
    </location>
</feature>
<feature type="helix" evidence="33">
    <location>
        <begin position="243"/>
        <end position="256"/>
    </location>
</feature>
<feature type="helix" evidence="33">
    <location>
        <begin position="258"/>
        <end position="261"/>
    </location>
</feature>
<feature type="helix" evidence="33">
    <location>
        <begin position="262"/>
        <end position="267"/>
    </location>
</feature>
<feature type="turn" evidence="33">
    <location>
        <begin position="269"/>
        <end position="271"/>
    </location>
</feature>
<feature type="strand" evidence="33">
    <location>
        <begin position="290"/>
        <end position="295"/>
    </location>
</feature>
<feature type="helix" evidence="33">
    <location>
        <begin position="304"/>
        <end position="311"/>
    </location>
</feature>
<feature type="strand" evidence="33">
    <location>
        <begin position="319"/>
        <end position="329"/>
    </location>
</feature>
<feature type="helix" evidence="33">
    <location>
        <begin position="333"/>
        <end position="335"/>
    </location>
</feature>
<feature type="strand" evidence="33">
    <location>
        <begin position="338"/>
        <end position="347"/>
    </location>
</feature>
<feature type="strand" evidence="33">
    <location>
        <begin position="366"/>
        <end position="373"/>
    </location>
</feature>
<feature type="strand" evidence="33">
    <location>
        <begin position="378"/>
        <end position="386"/>
    </location>
</feature>
<feature type="turn" evidence="33">
    <location>
        <begin position="387"/>
        <end position="390"/>
    </location>
</feature>
<feature type="strand" evidence="33">
    <location>
        <begin position="393"/>
        <end position="400"/>
    </location>
</feature>
<feature type="strand" evidence="33">
    <location>
        <begin position="405"/>
        <end position="409"/>
    </location>
</feature>
<feature type="strand" evidence="33">
    <location>
        <begin position="417"/>
        <end position="425"/>
    </location>
</feature>
<feature type="turn" evidence="33">
    <location>
        <begin position="438"/>
        <end position="440"/>
    </location>
</feature>
<feature type="strand" evidence="33">
    <location>
        <begin position="443"/>
        <end position="454"/>
    </location>
</feature>
<feature type="strand" evidence="33">
    <location>
        <begin position="457"/>
        <end position="466"/>
    </location>
</feature>
<feature type="strand" evidence="33">
    <location>
        <begin position="477"/>
        <end position="479"/>
    </location>
</feature>
<feature type="strand" evidence="33">
    <location>
        <begin position="481"/>
        <end position="484"/>
    </location>
</feature>
<feature type="helix" evidence="33">
    <location>
        <begin position="485"/>
        <end position="487"/>
    </location>
</feature>
<feature type="strand" evidence="33">
    <location>
        <begin position="489"/>
        <end position="491"/>
    </location>
</feature>
<feature type="strand" evidence="33">
    <location>
        <begin position="495"/>
        <end position="498"/>
    </location>
</feature>
<feature type="strand" evidence="33">
    <location>
        <begin position="502"/>
        <end position="506"/>
    </location>
</feature>
<feature type="strand" evidence="33">
    <location>
        <begin position="508"/>
        <end position="511"/>
    </location>
</feature>
<feature type="strand" evidence="33">
    <location>
        <begin position="513"/>
        <end position="516"/>
    </location>
</feature>
<feature type="strand" evidence="33">
    <location>
        <begin position="521"/>
        <end position="527"/>
    </location>
</feature>
<feature type="strand" evidence="33">
    <location>
        <begin position="531"/>
        <end position="533"/>
    </location>
</feature>
<feature type="strand" evidence="33">
    <location>
        <begin position="535"/>
        <end position="547"/>
    </location>
</feature>
<feature type="strand" evidence="33">
    <location>
        <begin position="550"/>
        <end position="557"/>
    </location>
</feature>
<feature type="strand" evidence="33">
    <location>
        <begin position="560"/>
        <end position="567"/>
    </location>
</feature>
<feature type="helix" evidence="33">
    <location>
        <begin position="575"/>
        <end position="577"/>
    </location>
</feature>
<feature type="helix" evidence="33">
    <location>
        <begin position="585"/>
        <end position="587"/>
    </location>
</feature>
<feature type="strand" evidence="33">
    <location>
        <begin position="589"/>
        <end position="594"/>
    </location>
</feature>
<feature type="strand" evidence="33">
    <location>
        <begin position="596"/>
        <end position="598"/>
    </location>
</feature>
<feature type="strand" evidence="33">
    <location>
        <begin position="600"/>
        <end position="602"/>
    </location>
</feature>
<feature type="strand" evidence="33">
    <location>
        <begin position="607"/>
        <end position="616"/>
    </location>
</feature>
<feature type="strand" evidence="33">
    <location>
        <begin position="623"/>
        <end position="632"/>
    </location>
</feature>
<feature type="helix" evidence="33">
    <location>
        <begin position="635"/>
        <end position="640"/>
    </location>
</feature>
<sequence>MNSGYPLANDLQGSMKNTNYKDWLAMCENNQQYGVNPAAINSSSVSTALKVAGAILKFVNPPAGTVLTVLSAVLPILWPTNTPTPERVWNDFMTNTGNLIDQTVTAYVRTDANAKMTVVKDYLDQYTTKFNTWKREPNNQSYRTAVITQFNLTSAKLRETAVYFSNLVGYELLLLPIYAQVANFNLLLIRDGLINAQEWSLARSAGDQLYNTMVQYTKEYIAHSITWYNKGLDVLRNKSNGQWITFNDYKREMTIQVLDILALFASYDPRRYPADKIDNTKLSKTEFTREIYTALVESPSSKSIAALEAALTRDVHLFTWLKRVDFWTNTIYQDLRFLSANKIGFSYTNSSAMQESGIYGSSGFGSNLTHQIQLNSNVYKTSITDTSSPSNRVTKMDFYKIDGTLASYNSNITPTPEGLRTTFFGFSTNENTPNQPTVNDYTHILSYIKTDVIDYNSNRVSFAWTHKIVDPNNQIYTDAITQVPAVKSNFLNATAKVIKGPGHTGGDLVALTSNGTLSGRMEIQCKTSIFNDPTRSYGLRIRYAANSPIVLNVSYVLQGVSRGTTISTESTFSRPNNIIPTDLKYEEFRYKDPFDAIVPMRLSSNQLITIAIQPLNMTSNNQVIIDRIEIIPITQSVLDETENQNLESEREVVNALFTNDAKDALNIGTTDYDIDQAANLVECISEELYPKEKMLLLDEVKNAKQLSQSRNVLQNGDFESATLGWTTSDNITIQEDDPIFKGHYLHMSGARDIDGTIFPTYIFQKIDESKLKPYTRYLVRGFVGSSKDVELVVSRYGEEIDAIMNVPADLNYLYPSTFDCEGSNRCETSAVPANIGNTSDMLYSCQYDTGKKHVVCQDSHQFSFTIDTGALDTNENIGVWVMFKISSPDGYASLDNLEVIEEGPIDGEALSRVKHMEKKWNDQMEAKRSETQQAYDVAKQAIDALFTNVQDEALQFDTTLAQIQYAEYLVQSIPYVYNDWLSDVPGMNYDIYVELDARVAQARYLYDTRNIIKNGDFTQGVMGWHVTGNADVQQIDGVSVLVLSNWSAGVSQNVHLQHNHGYVLRVIAKKEGPGNGYVTLMDCEENQEKLTFTSCEEGYITKTVDVFPDTDRVRIEIGETEGSFYIESIELICMNE</sequence>
<name>CR4BA_BACTI</name>
<reference evidence="29" key="1">
    <citation type="journal article" date="1988" name="Nucleic Acids Res.">
        <title>The complete nucleotide sequence of a 130 kDa mosquito-larvicidal delta-endotoxin gene of Bacillus thuringiensis var. israelensis.</title>
        <authorList>
            <person name="Tungpradubkul S."/>
            <person name="Settasatien C."/>
            <person name="Panyim S."/>
        </authorList>
    </citation>
    <scope>NUCLEOTIDE SEQUENCE [GENOMIC DNA]</scope>
</reference>
<reference evidence="30" key="2">
    <citation type="journal article" date="1988" name="Eur. J. Biochem.">
        <title>Common features of Bacillus thuringiensis toxins specific for Diptera and Lepidoptera.</title>
        <authorList>
            <person name="Chungjatupornchai W."/>
            <person name="Hoefte H."/>
            <person name="Seurinck J."/>
            <person name="Angsuthanasombat C."/>
            <person name="Vaeck M."/>
        </authorList>
    </citation>
    <scope>NUCLEOTIDE SEQUENCE [GENOMIC DNA]</scope>
    <scope>FUNCTION</scope>
    <scope>DEVELOPMENTAL STAGE</scope>
    <scope>CLEAVAGE</scope>
    <scope>TOXIC DOSE</scope>
    <source>
        <strain>4Q2-72</strain>
    </source>
</reference>
<reference evidence="27" key="3">
    <citation type="journal article" date="1988" name="Agric. Biol. Chem.">
        <title>Cloning and nucleotide sequences of the two 130 kDa insecticidal protein genes of Bacillus thuringiensis var. israelensis.</title>
        <authorList>
            <person name="Sen K."/>
            <person name="Honda G."/>
            <person name="Koyama N."/>
            <person name="Nishida M."/>
            <person name="Neki A."/>
            <person name="Sakai H."/>
            <person name="Himeno M."/>
            <person name="Komano T."/>
        </authorList>
    </citation>
    <scope>NUCLEOTIDE SEQUENCE [GENOMIC DNA]</scope>
    <source>
        <strain>HD522</strain>
    </source>
</reference>
<reference evidence="26" key="4">
    <citation type="journal article" date="1988" name="Gene">
        <title>Nucleotide sequence of the gene coding for a 130-kDa mosquitocidal protein of Bacillus thuringiensis israelensis.</title>
        <authorList>
            <person name="Yamamoto T."/>
            <person name="Watkinson I.A."/>
            <person name="Kim L."/>
            <person name="Sage M.V."/>
            <person name="Stratton R."/>
            <person name="Akande N."/>
            <person name="Li Y."/>
            <person name="Ma D.-P."/>
            <person name="Roe B.A."/>
        </authorList>
    </citation>
    <scope>NUCLEOTIDE SEQUENCE [GENOMIC DNA]</scope>
    <scope>PROTEIN SEQUENCE OF 1-13</scope>
    <source>
        <strain>HD567-61-9</strain>
        <plasmid>72-MDa</plasmid>
    </source>
</reference>
<reference evidence="28" key="5">
    <citation type="journal article" date="1987" name="Mol. Gen. Genet.">
        <title>Cloning and expression of 130-kd mosquito-larvicidal delta-endotoxin gene of Bacillus thuringiensis var. israelensis in Escherichia coli.</title>
        <authorList>
            <person name="Angsuthanasombat C."/>
            <person name="Chungjatupornchai W."/>
            <person name="Kertbundit S."/>
            <person name="Luxananil P."/>
            <person name="Settasatian C."/>
            <person name="Wilairat P."/>
            <person name="Panyim S."/>
        </authorList>
    </citation>
    <scope>NUCLEOTIDE SEQUENCE [GENOMIC DNA] OF 1-134</scope>
    <source>
        <strain>4Q2-72</strain>
        <plasmid>110-kb</plasmid>
    </source>
</reference>
<reference key="6">
    <citation type="journal article" date="1983" name="J. Cell Sci.">
        <title>Bacillus thuringiensis var israelensis crystal delta-endotoxin: effects on insect and mammalian cells in vitro and in vivo.</title>
        <authorList>
            <person name="Thomas W.E."/>
            <person name="Ellar D.J."/>
        </authorList>
    </citation>
    <scope>FUNCTION</scope>
    <scope>SUBCELLULAR LOCATION</scope>
    <source>
        <strain>IPS 78</strain>
    </source>
</reference>
<reference key="7">
    <citation type="journal article" date="1985" name="Biochem. Biophys. Res. Commun.">
        <title>Diversity of protein inclusion bodies and identification of mosquitocidal protein in Bacillus thuringiensis subsp. israelensis.</title>
        <authorList>
            <person name="Lee S.G."/>
            <person name="Eckblad W."/>
            <person name="Bulla L.A. Jr."/>
        </authorList>
    </citation>
    <scope>SUBCELLULAR LOCATION</scope>
    <scope>DEVELOPMENTAL STAGE</scope>
</reference>
<reference key="8">
    <citation type="journal article" date="2003" name="Appl. Environ. Microbiol.">
        <title>Introduction of Culex toxicity into Bacillus thuringiensis Cry4Ba by protein engineering.</title>
        <authorList>
            <person name="Abdullah M.A."/>
            <person name="Alzate O."/>
            <person name="Mohammad M."/>
            <person name="McNall R.J."/>
            <person name="Adang M.J."/>
            <person name="Dean D.H."/>
        </authorList>
    </citation>
    <scope>FUNCTION</scope>
    <scope>TOXIC DOSE</scope>
    <scope>MUTAGENESIS OF ARG-203; 331-ILE--GLN-333; VAL-393 AND ASP-454</scope>
</reference>
<reference key="9">
    <citation type="journal article" date="2008" name="Biochemistry">
        <title>Anopheles gambiae cadherin AgCad1 binds the Cry4Ba toxin of Bacillus thuringiensis israelensis and a fragment of AgCad1 synergizes toxicity.</title>
        <authorList>
            <person name="Hua G."/>
            <person name="Zhang R."/>
            <person name="Abdullah M.A."/>
            <person name="Adang M.J."/>
        </authorList>
    </citation>
    <scope>FUNCTION</scope>
    <scope>IDENTIFICATION OF HOST RECEPTOR</scope>
    <scope>SUBUNIT</scope>
    <scope>HOST TISSUE SPECIFICITY</scope>
</reference>
<reference key="10">
    <citation type="journal article" date="2013" name="Exp. Biol. Med. (Maywood)">
        <title>The Cry4B toxin of Bacillus thuringiensis subsp. israelensis kills Permethrin-resistant Anopheles gambiae, the principal vector of malaria.</title>
        <authorList>
            <person name="Ibrahim M.A."/>
            <person name="Griko N.B."/>
            <person name="Bulla L.A. Jr."/>
        </authorList>
    </citation>
    <scope>FUNCTION</scope>
    <scope>SUBCELLULAR LOCATION</scope>
    <scope>DEVELOPMENTAL STAGE</scope>
    <source>
        <strain>M1</strain>
    </source>
</reference>
<reference key="11">
    <citation type="journal article" date="2013" name="Exp. Biol. Med. (Maywood)">
        <title>Cytotoxicity of the Bacillus thuringiensis Cry4B toxin is mediated by the cadherin receptor BT-R(3) of Anopheles gambiae.</title>
        <authorList>
            <person name="Ibrahim M.A."/>
            <person name="Griko N.B."/>
            <person name="Bulla L.A. Jr."/>
        </authorList>
    </citation>
    <scope>FUNCTION</scope>
    <scope>IDENTIFICATION OF HOST RECEPTOR</scope>
    <scope>SUBUNIT</scope>
    <scope>CLEAVAGE</scope>
    <source>
        <strain>M1</strain>
    </source>
</reference>
<reference key="12">
    <citation type="journal article" date="2023" name="Exp. Biol. Med. (Maywood)">
        <title>Cell death signaling in Anopheles gambiae initiated by Bacillus thuringiensis Cry4B toxin involves Na+/K+ ATPase.</title>
        <authorList>
            <person name="Liu L."/>
            <person name="Bulla L.A. Jr."/>
        </authorList>
    </citation>
    <scope>FUNCTION</scope>
    <scope>COFACTOR</scope>
    <scope>ACTIVITY REGULATION</scope>
    <scope>TOXIC DOSE</scope>
    <source>
        <strain>M1</strain>
    </source>
</reference>
<reference evidence="31" key="13">
    <citation type="journal article" date="2005" name="J. Mol. Biol.">
        <title>Crystal structure of the mosquito-larvicidal toxin Cry4Ba and its biological implications.</title>
        <authorList>
            <person name="Boonserm P."/>
            <person name="Davis P."/>
            <person name="Ellar D.J."/>
            <person name="Li J."/>
        </authorList>
    </citation>
    <scope>X-RAY CRYSTALLOGRAPHY (1.75 ANGSTROMS) OF 84-641 (AN ACTIVE FRAGMENT)</scope>
    <scope>DOMAIN</scope>
</reference>
<reference evidence="32" key="14">
    <citation type="journal article" date="2015" name="J. Biol. Chem.">
        <title>Potential Prepore Trimer Formation by the Bacillus thuringiensis Mosquito-specific Toxin: Molecular insights into a critical prerequisite of membrane-bound monomers.</title>
        <authorList>
            <person name="Sriwimol W."/>
            <person name="Aroonkesorn A."/>
            <person name="Sakdee S."/>
            <person name="Kanchanawarin C."/>
            <person name="Uchihashi T."/>
            <person name="Ando T."/>
            <person name="Angsuthanasombat C."/>
        </authorList>
    </citation>
    <scope>X-RAY CRYSTALLOGRAPHY (2.00 ANGSTROMS) OF 40-641 (AN ACTIVE FRAGMENT)</scope>
    <scope>SUBUNIT</scope>
    <scope>MUTAGENESIS OF ARG-203</scope>
</reference>
<reference evidence="32" key="15">
    <citation type="journal article" date="2022" name="Biochem. Biophys. Res. Commun.">
        <title>Complete structure elucidation of a functional form of the Bacillus thuringiensis Cry4Ba delta-endotoxin: Insights into toxin-induced transmembrane pore architecture.</title>
        <authorList>
            <person name="Thamwiriyasati N."/>
            <person name="Kanchanawarin C."/>
            <person name="Imtong C."/>
            <person name="Chen C.J."/>
            <person name="Li H.C."/>
            <person name="Angsuthanasombat C."/>
        </authorList>
    </citation>
    <scope>X-RAY CRYSTALLOGRAPHY (2.00 ANGSTROMS) OF 40-641 (AN ACTIVE FRAGMENT)</scope>
    <scope>DOMAIN</scope>
    <scope>MUTAGENESIS OF ARG-203</scope>
</reference>
<reference key="16">
    <citation type="journal article" date="2007" name="J. Am. Mosq. Control Assoc.">
        <title>Bacillus thuringiensis serovariety israelensis and Bacillus sphaericus for mosquito control.</title>
        <authorList>
            <person name="Lacey L.A."/>
        </authorList>
    </citation>
    <scope>BIOTECHNOLOGY</scope>
    <scope>REVIEW ON MOSQUITO CONTROL</scope>
</reference>
<keyword id="KW-0002">3D-structure</keyword>
<keyword id="KW-0903">Direct protein sequencing</keyword>
<keyword id="KW-0460">Magnesium</keyword>
<keyword id="KW-0614">Plasmid</keyword>
<keyword id="KW-0732">Signal</keyword>
<keyword id="KW-0749">Sporulation</keyword>
<keyword id="KW-0800">Toxin</keyword>
<keyword id="KW-0843">Virulence</keyword>
<geneLocation type="plasmid">
    <name>110-kb</name>
</geneLocation>
<geneLocation type="plasmid">
    <name>72 Kb</name>
</geneLocation>
<geneLocation type="plasmid">
    <name>72-MDa</name>
</geneLocation>
<gene>
    <name evidence="13" type="primary">cry4Ba</name>
    <name evidence="17" type="synonym">bt8</name>
    <name evidence="15" type="synonym">cry4B</name>
    <name evidence="19" type="synonym">cryD2</name>
    <name type="synonym">cryIVB(a)</name>
    <name evidence="21" type="synonym">isrH3</name>
</gene>
<evidence type="ECO:0000269" key="1">
    <source>
    </source>
</evidence>
<evidence type="ECO:0000269" key="2">
    <source>
    </source>
</evidence>
<evidence type="ECO:0000269" key="3">
    <source>
    </source>
</evidence>
<evidence type="ECO:0000269" key="4">
    <source>
    </source>
</evidence>
<evidence type="ECO:0000269" key="5">
    <source>
    </source>
</evidence>
<evidence type="ECO:0000269" key="6">
    <source>
    </source>
</evidence>
<evidence type="ECO:0000269" key="7">
    <source>
    </source>
</evidence>
<evidence type="ECO:0000269" key="8">
    <source>
    </source>
</evidence>
<evidence type="ECO:0000269" key="9">
    <source>
    </source>
</evidence>
<evidence type="ECO:0000269" key="10">
    <source>
    </source>
</evidence>
<evidence type="ECO:0000269" key="11">
    <source>
    </source>
</evidence>
<evidence type="ECO:0000269" key="12">
    <source>
    </source>
</evidence>
<evidence type="ECO:0000303" key="13">
    <source>
    </source>
</evidence>
<evidence type="ECO:0000303" key="14">
    <source>
    </source>
</evidence>
<evidence type="ECO:0000303" key="15">
    <source>
    </source>
</evidence>
<evidence type="ECO:0000303" key="16">
    <source>
    </source>
</evidence>
<evidence type="ECO:0000303" key="17">
    <source>
    </source>
</evidence>
<evidence type="ECO:0000303" key="18">
    <source>
    </source>
</evidence>
<evidence type="ECO:0000303" key="19">
    <source>
    </source>
</evidence>
<evidence type="ECO:0000303" key="20">
    <source>
    </source>
</evidence>
<evidence type="ECO:0000303" key="21">
    <source ref="3"/>
</evidence>
<evidence type="ECO:0000305" key="22"/>
<evidence type="ECO:0000305" key="23">
    <source>
    </source>
</evidence>
<evidence type="ECO:0000305" key="24">
    <source>
    </source>
</evidence>
<evidence type="ECO:0000305" key="25">
    <source>
    </source>
</evidence>
<evidence type="ECO:0000312" key="26">
    <source>
        <dbReference type="EMBL" id="AAA22337.1"/>
    </source>
</evidence>
<evidence type="ECO:0000312" key="27">
    <source>
        <dbReference type="EMBL" id="BAA00178.1"/>
    </source>
</evidence>
<evidence type="ECO:0000312" key="28">
    <source>
        <dbReference type="EMBL" id="CAA29174.1"/>
    </source>
</evidence>
<evidence type="ECO:0000312" key="29">
    <source>
        <dbReference type="EMBL" id="CAA30114.1"/>
    </source>
</evidence>
<evidence type="ECO:0000312" key="30">
    <source>
        <dbReference type="EMBL" id="CAA30312.1"/>
    </source>
</evidence>
<evidence type="ECO:0007744" key="31">
    <source>
        <dbReference type="PDB" id="1W99"/>
    </source>
</evidence>
<evidence type="ECO:0007744" key="32">
    <source>
        <dbReference type="PDB" id="4MOA"/>
    </source>
</evidence>
<evidence type="ECO:0007829" key="33">
    <source>
        <dbReference type="PDB" id="1W99"/>
    </source>
</evidence>
<evidence type="ECO:0007829" key="34">
    <source>
        <dbReference type="PDB" id="4MOA"/>
    </source>
</evidence>
<comment type="function">
    <text evidence="1 4 5 6 8 11 12 24 25">A pesticidal protein active against Aedes and Anopheles mosquito species; activity on Culex species is strain dependent (PubMed:12957922, PubMed:2833395, PubMed:37642306, PubMed:6874728). It remains toxic to permethrin-resistant strains of A.gambiae (PubMed:23760000). Following activation of the protoxin by mosquito larvae midgut extract (or by chymotrypsin or trypsin treatment) it becomes insecticidal (PubMed:12957922, PubMed:18407662, PubMed:23760000, PubMed:23788176, PubMed:2833395, PubMed:37642306). Causes mosquito cell death by activating a host G-protein-coupled receptor which subsequently activates adenylyl cyclase and increases cAMP production (PubMed:37642306). cAMP activates protein kinase A which sets off a series of downstream events which includes increased exocytosis (probably bringing more receptor to the cell membrane), Na+/K+-ATPase activation and eventual host cell death (Probable) (PubMed:37642306). Another group suggests that alkaline phosphatase serves as the insect receptor and that the protein forms pores in insect cell membranes (PubMed:26112409).</text>
</comment>
<comment type="cofactor">
    <cofactor evidence="11">
        <name>Mg(2+)</name>
        <dbReference type="ChEBI" id="CHEBI:18420"/>
    </cofactor>
    <text evidence="11">Mg(2+) is required for toxic activity in insect cells (PubMed:37642306).</text>
</comment>
<comment type="activity regulation">
    <text evidence="11">Toxic activity on Trichoplusia ni insect cells stably transfected with the AgCad1/BT-R3 receptor leads to oncosis, cell death characterized by cell swelling, membrane blebbing and depletion of energy reserves (PubMed:37642306). Cell death is blocked by EDTA (but not EGTA) and is partially prevented by pretreatment with NF449 (inhibits G-s-alpha-60A and adenylyl cyclase, AC) and 2',5'-dideoxyadenosine 3'-diphosphate (ddADP, inhibits AC), while H-89 and PKAI 14-22 (both inhibit protein kinase A), ouabain (inhibits Na+/K+-ATPase) and a cell exocytosis inhibitor (Exo1) nearly completely prevent the action of the toxin in this system (PubMed:37642306). The cAMP analog pCPT-cAMP and the AC activator FSK enhance toxicity (PubMed:37642306).</text>
</comment>
<comment type="subunit">
    <text evidence="4 6 7 23">In the presence of micelles active toxin forms oligomers that can be fit into cryo-EM maps as trimers (PubMed:26112409). Binds to host (A.gambiae) cadherin AgCad1 (also called BT-R3), probably on the cell surface (PubMed:18407662, PubMed:23788176). Activated toxin may bind its host AgCad1 receptor as a monomer, but also forms an oligomer that is not active (Probable) (PubMed:23788176).</text>
</comment>
<comment type="subcellular location">
    <subcellularLocation>
        <location evidence="5 12">Spore</location>
    </subcellularLocation>
    <text evidence="5 9">Accumulates in a membrane-enclosed paracrystalline inclusion body which is deposited alongside the endospore during sporulation (PubMed:23760000, PubMed:2858207).</text>
</comment>
<comment type="tissue specificity">
    <text evidence="4">Host (A.gambiae) larval midgut; binds to host brush border membranes, probably to cadherin-AgCad1 (Cad1, also called BT-R3) (PubMed:18407662).</text>
</comment>
<comment type="developmental stage">
    <text evidence="5 8 9">The crystal proteins are produced during sporulation (PubMed:23760000, PubMed:2833395, PubMed:2858207). Accumulates in parasporal crystals which form inclusion bodies; inclusion proteins are the major proteins synthesized after sporulation onset (PubMed:23760000, PubMed:2858207).</text>
</comment>
<comment type="domain">
    <text evidence="2 6 8 10">The toxic segment of the protein is located in the N-terminus; it is about 65 kDa in size (PubMed:23788176, PubMed:2833395). The first 83 residues are not necessary for toxicity and presumably include the signal sequence (PubMed:15811374). An active fragment (residues 84-641) has 3 domains; domain I is an alpha-helical bundle of five helices, domain II is a beta-prism of three antiparallel beta-sheets and domain III is a beta-sandwich of two antiparallel beta-sheets (PubMed:15811374, PubMed:35797735). Domains II and II pack on top of each other and against the long side of domain I (PubMed:15811374, PubMed:35797735).</text>
</comment>
<comment type="PTM">
    <text evidence="6 8">Treatment of recombinant protein with A.aegypti 3rd instar larvae midgut extract for 1 hour yields major bands of 72 and 45 kDa, the combined proteins are toxic to mosquitoes. Longer digestion, which removes the 72 kDa protein, yields a non-toxic preparation (PubMed:2833395). Proteolysis by yields a 65 kDa toxic protein and 48 and 17 kDa fragments which are not toxic (PubMed:23788176).</text>
</comment>
<comment type="toxic dose">
    <text evidence="8">LC(50) is 8 ng/ml for intact bacteria-purified crystals on Aedes aegypti 3rd instar larvae (PubMed:2833395).</text>
</comment>
<comment type="toxic dose">
    <text evidence="1">LC(50) is 25 ng/ml for purified inclusion crystal protein from E.coli fed to Anopheles quadrimaculatus 2nd instar larvae (PubMed:12957922).</text>
</comment>
<comment type="toxic dose">
    <text evidence="1">LC(50) is 61 ng/ml for purified inclusion crystal protein from E.coli fed to A.aegypti 2nd instar larvae (PubMed:12957922).</text>
</comment>
<comment type="toxic dose">
    <text evidence="11">LC(50) is 180 ng/ml for strain M1 native toxin on Anopheles gambiae 3rd instar larvae, 200 ng/ml for recombinant toxin (PubMed:37642306).</text>
</comment>
<comment type="toxic dose">
    <text evidence="11">LC(50) is 250 ng/ml for strain M1 native toxin on A.aegypti 3rd instar larvae, 530 ng/ml for recombinant toxin (PubMed:37642306).</text>
</comment>
<comment type="toxic dose">
    <text evidence="11">LC(50) is 330 ng/ml for strain M1 native toxin on Culex pipiens gambiae 3rd instar larvae, 810 ng/ml for recombinant toxin (PubMed:37642306).</text>
</comment>
<comment type="biotechnology">
    <text evidence="3">Whole bacteria have been used since 1977 to control mosquito populations (PubMed:17853604).</text>
</comment>
<comment type="miscellaneous">
    <text evidence="5 9">One of several insecticidal Cry and Cyt proteins in the parasporal crystal (PubMed:23760000, PubMed:2858207).</text>
</comment>
<comment type="similarity">
    <text evidence="22">Belongs to the delta endotoxin family.</text>
</comment>
<comment type="caution">
    <text evidence="4 6 7 10 11">There is controversy regarding the receptor and mode of action of this protein. Two groups have shown that cadherin-AgCad1 is the receptor and that toxicity involves a G-protein cascade leading to Na+/K+-APTase stimulation and cell death (PubMed:18407662, PubMed:23788176, PubMed:37642306). Another group suggests alkaline phosphatase is the receptor and postulates the toxin forms pores (PubMed:26112409, PubMed:35797735).</text>
</comment>
<protein>
    <recommendedName>
        <fullName evidence="15 20">Pesticidal crystal protein Cry4B protoxin</fullName>
    </recommendedName>
    <alternativeName>
        <fullName>128 kDa crystal protein</fullName>
    </alternativeName>
    <alternativeName>
        <fullName evidence="16 18">130 kDa mosquito-larvicidal delta-endotoxin</fullName>
    </alternativeName>
    <alternativeName>
        <fullName evidence="17">Bt8</fullName>
    </alternativeName>
    <alternativeName>
        <fullName>Crystaline entomocidal protoxin</fullName>
    </alternativeName>
    <alternativeName>
        <fullName>Insecticidal delta-endotoxin CryIVB(a)</fullName>
    </alternativeName>
    <alternativeName>
        <fullName evidence="14">Pesticidal crystal protein Cry4Ba protoxin</fullName>
    </alternativeName>
</protein>
<organism>
    <name type="scientific">Bacillus thuringiensis subsp. israelensis</name>
    <dbReference type="NCBI Taxonomy" id="1430"/>
    <lineage>
        <taxon>Bacteria</taxon>
        <taxon>Bacillati</taxon>
        <taxon>Bacillota</taxon>
        <taxon>Bacilli</taxon>
        <taxon>Bacillales</taxon>
        <taxon>Bacillaceae</taxon>
        <taxon>Bacillus</taxon>
        <taxon>Bacillus cereus group</taxon>
    </lineage>
</organism>